<protein>
    <recommendedName>
        <fullName>Uncharacterized 7.2 kDa protein in HE65-PK2 intergenic region</fullName>
    </recommendedName>
</protein>
<sequence length="62" mass="7216">MKLIILLFVVAAFVTLAMGKKSLKDPLTITTAHFDHPEGLKHKIRRPYNKHEDRLIQCKIYL</sequence>
<dbReference type="EMBL" id="L22858">
    <property type="protein sequence ID" value="AAA66752.1"/>
    <property type="molecule type" value="Genomic_DNA"/>
</dbReference>
<dbReference type="PIR" id="C72865">
    <property type="entry name" value="C72865"/>
</dbReference>
<dbReference type="RefSeq" id="NP_054152.1">
    <property type="nucleotide sequence ID" value="NC_001623.1"/>
</dbReference>
<dbReference type="GeneID" id="1403955"/>
<dbReference type="KEGG" id="vg:1403955"/>
<dbReference type="OrthoDB" id="28091at10239"/>
<dbReference type="Proteomes" id="UP000008292">
    <property type="component" value="Segment"/>
</dbReference>
<dbReference type="InterPro" id="IPR035259">
    <property type="entry name" value="DUF5437"/>
</dbReference>
<dbReference type="Pfam" id="PF17505">
    <property type="entry name" value="DUF5437"/>
    <property type="match status" value="1"/>
</dbReference>
<organismHost>
    <name type="scientific">Lepidoptera</name>
    <name type="common">butterflies and moths</name>
    <dbReference type="NCBI Taxonomy" id="7088"/>
</organismHost>
<proteinExistence type="inferred from homology"/>
<reference key="1">
    <citation type="journal article" date="1994" name="Virology">
        <title>The complete DNA sequence of Autographa californica nuclear polyhedrosis virus.</title>
        <authorList>
            <person name="Ayres M.D."/>
            <person name="Howard S.C."/>
            <person name="Kuzio J."/>
            <person name="Lopez-Ferber M."/>
            <person name="Possee R.D."/>
        </authorList>
    </citation>
    <scope>NUCLEOTIDE SEQUENCE [LARGE SCALE GENOMIC DNA]</scope>
    <source>
        <strain>C6</strain>
    </source>
</reference>
<accession>P41675</accession>
<keyword id="KW-1185">Reference proteome</keyword>
<keyword id="KW-0732">Signal</keyword>
<organism>
    <name type="scientific">Autographa californica nuclear polyhedrosis virus</name>
    <name type="common">AcMNPV</name>
    <dbReference type="NCBI Taxonomy" id="46015"/>
    <lineage>
        <taxon>Viruses</taxon>
        <taxon>Viruses incertae sedis</taxon>
        <taxon>Naldaviricetes</taxon>
        <taxon>Lefavirales</taxon>
        <taxon>Baculoviridae</taxon>
        <taxon>Alphabaculovirus</taxon>
        <taxon>Alphabaculovirus aucalifornicae</taxon>
    </lineage>
</organism>
<name>Y122_NPVAC</name>
<evidence type="ECO:0000255" key="1"/>
<feature type="signal peptide" evidence="1">
    <location>
        <begin position="1"/>
        <end position="19"/>
    </location>
</feature>
<feature type="chain" id="PRO_0000036757" description="Uncharacterized 7.2 kDa protein in HE65-PK2 intergenic region">
    <location>
        <begin position="20"/>
        <end position="62"/>
    </location>
</feature>